<dbReference type="EMBL" id="AP008226">
    <property type="protein sequence ID" value="BAD71495.1"/>
    <property type="molecule type" value="Genomic_DNA"/>
</dbReference>
<dbReference type="RefSeq" id="WP_011228842.1">
    <property type="nucleotide sequence ID" value="NC_006461.1"/>
</dbReference>
<dbReference type="RefSeq" id="YP_144938.1">
    <property type="nucleotide sequence ID" value="NC_006461.1"/>
</dbReference>
<dbReference type="PDB" id="2ZJS">
    <property type="method" value="X-ray"/>
    <property type="resolution" value="3.20 A"/>
    <property type="chains" value="Y=3-434"/>
</dbReference>
<dbReference type="PDB" id="2ZQP">
    <property type="method" value="X-ray"/>
    <property type="resolution" value="6.00 A"/>
    <property type="chains" value="Y=3-434"/>
</dbReference>
<dbReference type="PDB" id="5AWW">
    <property type="method" value="X-ray"/>
    <property type="resolution" value="2.72 A"/>
    <property type="chains" value="Y=1-438"/>
</dbReference>
<dbReference type="PDB" id="5CH4">
    <property type="method" value="X-ray"/>
    <property type="resolution" value="3.64 A"/>
    <property type="chains" value="Y=1-435"/>
</dbReference>
<dbReference type="PDBsum" id="2ZJS"/>
<dbReference type="PDBsum" id="2ZQP"/>
<dbReference type="PDBsum" id="5AWW"/>
<dbReference type="PDBsum" id="5CH4"/>
<dbReference type="SMR" id="Q5SHQ8"/>
<dbReference type="ABCD" id="Q5SHQ8">
    <property type="antibodies" value="1 sequenced antibody"/>
</dbReference>
<dbReference type="EnsemblBacteria" id="BAD71495">
    <property type="protein sequence ID" value="BAD71495"/>
    <property type="gene ID" value="BAD71495"/>
</dbReference>
<dbReference type="GeneID" id="3169829"/>
<dbReference type="KEGG" id="ttj:TTHA1672"/>
<dbReference type="eggNOG" id="COG0201">
    <property type="taxonomic scope" value="Bacteria"/>
</dbReference>
<dbReference type="HOGENOM" id="CLU_030313_0_2_0"/>
<dbReference type="PhylomeDB" id="Q5SHQ8"/>
<dbReference type="EvolutionaryTrace" id="Q5SHQ8"/>
<dbReference type="Proteomes" id="UP000000532">
    <property type="component" value="Chromosome"/>
</dbReference>
<dbReference type="GO" id="GO:0005886">
    <property type="term" value="C:plasma membrane"/>
    <property type="evidence" value="ECO:0007669"/>
    <property type="project" value="UniProtKB-SubCell"/>
</dbReference>
<dbReference type="GO" id="GO:0065002">
    <property type="term" value="P:intracellular protein transmembrane transport"/>
    <property type="evidence" value="ECO:0007669"/>
    <property type="project" value="UniProtKB-UniRule"/>
</dbReference>
<dbReference type="GO" id="GO:0006605">
    <property type="term" value="P:protein targeting"/>
    <property type="evidence" value="ECO:0007669"/>
    <property type="project" value="UniProtKB-UniRule"/>
</dbReference>
<dbReference type="GO" id="GO:0043952">
    <property type="term" value="P:protein transport by the Sec complex"/>
    <property type="evidence" value="ECO:0007669"/>
    <property type="project" value="UniProtKB-UniRule"/>
</dbReference>
<dbReference type="FunFam" id="1.10.3370.10:FF:000001">
    <property type="entry name" value="Preprotein translocase subunit SecY"/>
    <property type="match status" value="1"/>
</dbReference>
<dbReference type="Gene3D" id="1.10.3370.10">
    <property type="entry name" value="SecY subunit domain"/>
    <property type="match status" value="1"/>
</dbReference>
<dbReference type="HAMAP" id="MF_01465">
    <property type="entry name" value="SecY"/>
    <property type="match status" value="1"/>
</dbReference>
<dbReference type="InterPro" id="IPR026593">
    <property type="entry name" value="SecY"/>
</dbReference>
<dbReference type="InterPro" id="IPR002208">
    <property type="entry name" value="SecY/SEC61-alpha"/>
</dbReference>
<dbReference type="InterPro" id="IPR030659">
    <property type="entry name" value="SecY_CS"/>
</dbReference>
<dbReference type="InterPro" id="IPR023201">
    <property type="entry name" value="SecY_dom_sf"/>
</dbReference>
<dbReference type="NCBIfam" id="TIGR00967">
    <property type="entry name" value="3a0501s007"/>
    <property type="match status" value="1"/>
</dbReference>
<dbReference type="PANTHER" id="PTHR10906">
    <property type="entry name" value="SECY/SEC61-ALPHA FAMILY MEMBER"/>
    <property type="match status" value="1"/>
</dbReference>
<dbReference type="Pfam" id="PF00344">
    <property type="entry name" value="SecY"/>
    <property type="match status" value="1"/>
</dbReference>
<dbReference type="PIRSF" id="PIRSF004557">
    <property type="entry name" value="SecY"/>
    <property type="match status" value="1"/>
</dbReference>
<dbReference type="PRINTS" id="PR00303">
    <property type="entry name" value="SECYTRNLCASE"/>
</dbReference>
<dbReference type="SUPFAM" id="SSF103491">
    <property type="entry name" value="Preprotein translocase SecY subunit"/>
    <property type="match status" value="1"/>
</dbReference>
<dbReference type="PROSITE" id="PS00756">
    <property type="entry name" value="SECY_2"/>
    <property type="match status" value="1"/>
</dbReference>
<evidence type="ECO:0000269" key="1">
    <source>
    </source>
</evidence>
<evidence type="ECO:0000305" key="2"/>
<evidence type="ECO:0007829" key="3">
    <source>
        <dbReference type="PDB" id="2ZJS"/>
    </source>
</evidence>
<evidence type="ECO:0007829" key="4">
    <source>
        <dbReference type="PDB" id="5AWW"/>
    </source>
</evidence>
<comment type="function">
    <text>The central subunit of the protein translocation channel SecYEG. Consists of two halves formed by TMs 1-5 and 6-10. These two domains form a lateral gate at the front which open onto the bilayer between TMs 2 and 7, and are clamped together by SecE at the back. The channel is closed by both a pore ring composed of hydrophobic SecY resides and a short helix (helix 2A) on the extracellular side of the membrane which forms a plug. The plug probably moves laterally to allow the channel to open. The ring and the pore may move independently.</text>
</comment>
<comment type="subunit">
    <text evidence="1">Component of the Sec protein translocase complex. Heterotrimer consisting of SecY, SecE and SecG subunits. The heterotrimers can form oligomers, although 1 heterotrimer is thought to be able to translocate proteins. Interacts with the ribosome. Interacts with SecDF, and other proteins may be involved. Interacts with SecA.</text>
</comment>
<comment type="subcellular location">
    <subcellularLocation>
        <location evidence="1">Cell inner membrane</location>
        <topology evidence="1">Multi-pass membrane protein</topology>
    </subcellularLocation>
</comment>
<comment type="similarity">
    <text evidence="2">Belongs to the SecY/SEC61-alpha family.</text>
</comment>
<organism>
    <name type="scientific">Thermus thermophilus (strain ATCC 27634 / DSM 579 / HB8)</name>
    <dbReference type="NCBI Taxonomy" id="300852"/>
    <lineage>
        <taxon>Bacteria</taxon>
        <taxon>Thermotogati</taxon>
        <taxon>Deinococcota</taxon>
        <taxon>Deinococci</taxon>
        <taxon>Thermales</taxon>
        <taxon>Thermaceae</taxon>
        <taxon>Thermus</taxon>
    </lineage>
</organism>
<reference key="1">
    <citation type="submission" date="2004-11" db="EMBL/GenBank/DDBJ databases">
        <title>Complete genome sequence of Thermus thermophilus HB8.</title>
        <authorList>
            <person name="Masui R."/>
            <person name="Kurokawa K."/>
            <person name="Nakagawa N."/>
            <person name="Tokunaga F."/>
            <person name="Koyama Y."/>
            <person name="Shibata T."/>
            <person name="Oshima T."/>
            <person name="Yokoyama S."/>
            <person name="Yasunaga T."/>
            <person name="Kuramitsu S."/>
        </authorList>
    </citation>
    <scope>NUCLEOTIDE SEQUENCE [LARGE SCALE GENOMIC DNA]</scope>
    <source>
        <strain>ATCC 27634 / DSM 579 / HB8</strain>
    </source>
</reference>
<reference key="2">
    <citation type="journal article" date="2008" name="Nature">
        <title>Conformational transition of Sec machinery inferred from bacterial SecYE structures.</title>
        <authorList>
            <person name="Tsukazaki T."/>
            <person name="Mori H."/>
            <person name="Fukai S."/>
            <person name="Ishitani R."/>
            <person name="Mori T."/>
            <person name="Dohmae N."/>
            <person name="Perederina A."/>
            <person name="Sugita Y."/>
            <person name="Vassylyev D.G."/>
            <person name="Ito K."/>
            <person name="Nureki O."/>
        </authorList>
    </citation>
    <scope>X-RAY CRYSTALLOGRAPHY (3.2 ANGSTROMS) OF 3-434 OF THE SECYE COMPLEX WITH A PARTIALLY OPEN LATERAL GATE</scope>
    <scope>SUBUNIT</scope>
    <scope>SUBCELLULAR LOCATION</scope>
    <scope>INTERACTION WITH SECA</scope>
</reference>
<proteinExistence type="evidence at protein level"/>
<protein>
    <recommendedName>
        <fullName>Protein translocase subunit SecY</fullName>
    </recommendedName>
</protein>
<keyword id="KW-0002">3D-structure</keyword>
<keyword id="KW-0997">Cell inner membrane</keyword>
<keyword id="KW-1003">Cell membrane</keyword>
<keyword id="KW-0472">Membrane</keyword>
<keyword id="KW-0653">Protein transport</keyword>
<keyword id="KW-1185">Reference proteome</keyword>
<keyword id="KW-0811">Translocation</keyword>
<keyword id="KW-0812">Transmembrane</keyword>
<keyword id="KW-1133">Transmembrane helix</keyword>
<keyword id="KW-0813">Transport</keyword>
<accession>Q5SHQ8</accession>
<feature type="chain" id="PRO_0000414214" description="Protein translocase subunit SecY">
    <location>
        <begin position="1"/>
        <end position="438"/>
    </location>
</feature>
<feature type="topological domain" description="Cytoplasmic">
    <location>
        <begin position="1"/>
        <end position="18"/>
    </location>
</feature>
<feature type="transmembrane region" description="Helical; Name=1">
    <location>
        <begin position="19"/>
        <end position="34"/>
    </location>
</feature>
<feature type="topological domain" description="Periplasmic">
    <location>
        <begin position="35"/>
        <end position="56"/>
    </location>
</feature>
<feature type="transmembrane region" description="Discontinuously helical; Name=2">
    <location>
        <begin position="57"/>
        <end position="87"/>
    </location>
</feature>
<feature type="intramembrane region" description="Helical; Name=Helix 2A">
    <location>
        <begin position="57"/>
        <end position="67"/>
    </location>
</feature>
<feature type="intramembrane region">
    <location>
        <begin position="68"/>
        <end position="71"/>
    </location>
</feature>
<feature type="intramembrane region" description="Helical; Name=Helix 2B">
    <location>
        <begin position="72"/>
        <end position="87"/>
    </location>
</feature>
<feature type="topological domain" description="Cytoplasmic">
    <location>
        <begin position="88"/>
        <end position="114"/>
    </location>
</feature>
<feature type="transmembrane region" description="Helical; Name=3">
    <location>
        <begin position="115"/>
        <end position="130"/>
    </location>
</feature>
<feature type="topological domain" description="Periplasmic">
    <location>
        <begin position="131"/>
        <end position="157"/>
    </location>
</feature>
<feature type="transmembrane region" description="Helical; Name=4">
    <location>
        <begin position="158"/>
        <end position="175"/>
    </location>
</feature>
<feature type="topological domain" description="Cytoplasmic">
    <location>
        <begin position="176"/>
        <end position="182"/>
    </location>
</feature>
<feature type="transmembrane region" description="Helical; Name=5">
    <location>
        <begin position="183"/>
        <end position="201"/>
    </location>
</feature>
<feature type="topological domain" description="Periplasmic">
    <location>
        <begin position="202"/>
        <end position="214"/>
    </location>
</feature>
<feature type="transmembrane region" description="Helical; Name=6">
    <location>
        <begin position="215"/>
        <end position="231"/>
    </location>
</feature>
<feature type="topological domain" description="Cytoplasmic">
    <location>
        <begin position="232"/>
        <end position="271"/>
    </location>
</feature>
<feature type="transmembrane region" description="Helical; Name=7">
    <location>
        <begin position="272"/>
        <end position="288"/>
    </location>
</feature>
<feature type="topological domain" description="Periplasmic">
    <location>
        <begin position="289"/>
        <end position="303"/>
    </location>
</feature>
<feature type="transmembrane region" description="Helical; Name=8">
    <location>
        <begin position="304"/>
        <end position="323"/>
    </location>
</feature>
<feature type="topological domain" description="Cytoplasmic">
    <location>
        <begin position="324"/>
        <end position="372"/>
    </location>
</feature>
<feature type="transmembrane region" description="Helical; Name=9">
    <location>
        <begin position="373"/>
        <end position="389"/>
    </location>
</feature>
<feature type="topological domain" description="Periplasmic">
    <location>
        <begin position="390"/>
        <end position="392"/>
    </location>
</feature>
<feature type="transmembrane region" description="Helical; Name=10">
    <location>
        <begin position="393"/>
        <end position="408"/>
    </location>
</feature>
<feature type="topological domain" description="Cytoplasmic" evidence="2">
    <location>
        <begin position="409"/>
        <end position="438"/>
    </location>
</feature>
<feature type="helix" evidence="4">
    <location>
        <begin position="2"/>
        <end position="10"/>
    </location>
</feature>
<feature type="helix" evidence="4">
    <location>
        <begin position="12"/>
        <end position="31"/>
    </location>
</feature>
<feature type="helix" evidence="4">
    <location>
        <begin position="41"/>
        <end position="48"/>
    </location>
</feature>
<feature type="helix" evidence="4">
    <location>
        <begin position="53"/>
        <end position="56"/>
    </location>
</feature>
<feature type="helix" evidence="4">
    <location>
        <begin position="57"/>
        <end position="61"/>
    </location>
</feature>
<feature type="turn" evidence="4">
    <location>
        <begin position="62"/>
        <end position="64"/>
    </location>
</feature>
<feature type="helix" evidence="4">
    <location>
        <begin position="66"/>
        <end position="69"/>
    </location>
</feature>
<feature type="turn" evidence="4">
    <location>
        <begin position="72"/>
        <end position="77"/>
    </location>
</feature>
<feature type="helix" evidence="4">
    <location>
        <begin position="78"/>
        <end position="93"/>
    </location>
</feature>
<feature type="helix" evidence="4">
    <location>
        <begin position="95"/>
        <end position="101"/>
    </location>
</feature>
<feature type="turn" evidence="4">
    <location>
        <begin position="105"/>
        <end position="107"/>
    </location>
</feature>
<feature type="helix" evidence="4">
    <location>
        <begin position="108"/>
        <end position="133"/>
    </location>
</feature>
<feature type="helix" evidence="4">
    <location>
        <begin position="137"/>
        <end position="140"/>
    </location>
</feature>
<feature type="helix" evidence="4">
    <location>
        <begin position="151"/>
        <end position="178"/>
    </location>
</feature>
<feature type="strand" evidence="4">
    <location>
        <begin position="179"/>
        <end position="181"/>
    </location>
</feature>
<feature type="helix" evidence="4">
    <location>
        <begin position="183"/>
        <end position="193"/>
    </location>
</feature>
<feature type="helix" evidence="4">
    <location>
        <begin position="196"/>
        <end position="209"/>
    </location>
</feature>
<feature type="helix" evidence="4">
    <location>
        <begin position="214"/>
        <end position="236"/>
    </location>
</feature>
<feature type="strand" evidence="4">
    <location>
        <begin position="238"/>
        <end position="244"/>
    </location>
</feature>
<feature type="strand" evidence="4">
    <location>
        <begin position="248"/>
        <end position="250"/>
    </location>
</feature>
<feature type="strand" evidence="4">
    <location>
        <begin position="253"/>
        <end position="255"/>
    </location>
</feature>
<feature type="strand" evidence="4">
    <location>
        <begin position="257"/>
        <end position="267"/>
    </location>
</feature>
<feature type="helix" evidence="4">
    <location>
        <begin position="272"/>
        <end position="288"/>
    </location>
</feature>
<feature type="helix" evidence="4">
    <location>
        <begin position="295"/>
        <end position="303"/>
    </location>
</feature>
<feature type="strand" evidence="3">
    <location>
        <begin position="306"/>
        <end position="308"/>
    </location>
</feature>
<feature type="helix" evidence="4">
    <location>
        <begin position="309"/>
        <end position="330"/>
    </location>
</feature>
<feature type="helix" evidence="4">
    <location>
        <begin position="333"/>
        <end position="342"/>
    </location>
</feature>
<feature type="helix" evidence="4">
    <location>
        <begin position="354"/>
        <end position="389"/>
    </location>
</feature>
<feature type="helix" evidence="4">
    <location>
        <begin position="394"/>
        <end position="396"/>
    </location>
</feature>
<feature type="helix" evidence="4">
    <location>
        <begin position="398"/>
        <end position="423"/>
    </location>
</feature>
<gene>
    <name type="primary">secY</name>
    <name type="ordered locus">TTHA1672</name>
</gene>
<sequence>MLKAFWSALQIPELRQRVLFTLLVLAAYRLGAFIPTPGVDLDKIQEFLRTAQGGVFGIINLFSGGNFERFSIFALGIMPYITAAIIMQILVTVVPALEKLSKEGEEGRRIINQYTRIGGIALGAFQGFFLATAFLGAEGGRFLLPGWSPGPFFWFVVVVTQVAGIALLLWMAERITEYGIGNGTSLIIFAGIVVEWLPQILRTIGLIRTGEVNLVAFLFFLAFIVLAFAGMAAVQQAERRIPVQYARKVVGRRVYGGQATYIPIKLNAAGVIPIIFAAAILQIPIFLAAPFQDNPVLQGIANFFNPTRPSGLFIEVLLVILFTYVYTAVQFDPKRIAESLREYGGFIPGIRPGEPTVKFLEHIVSRLTLWGALFLGLVTLLPQIIQNLTGIHSIAFSGIGLLIVVGVALDTLRQVESQLMLRSYEGFLSRGRLRGRNR</sequence>
<name>SECY_THET8</name>